<proteinExistence type="inferred from homology"/>
<evidence type="ECO:0000250" key="1"/>
<evidence type="ECO:0000255" key="2"/>
<evidence type="ECO:0000305" key="3"/>
<comment type="function">
    <text evidence="1">Pectinolytic enzymes consist of four classes of enzymes: pectin lyase, polygalacturonase, pectin methylesterase and rhamnogalacturonase. Among pectinolytic enzymes, pectin lyase is the most important in depolymerization of pectin, since it cleaves internal glycosidic bonds of highly methylated pectins (By similarity).</text>
</comment>
<comment type="catalytic activity">
    <reaction>
        <text>Eliminative cleavage of (1-&gt;4)-alpha-D-galacturonan methyl ester to give oligosaccharides with 4-deoxy-6-O-methyl-alpha-D-galact-4-enuronosyl groups at their non-reducing ends.</text>
        <dbReference type="EC" id="4.2.2.10"/>
    </reaction>
</comment>
<comment type="subcellular location">
    <subcellularLocation>
        <location evidence="1">Secreted</location>
    </subcellularLocation>
</comment>
<comment type="similarity">
    <text evidence="3">Belongs to the polysaccharide lyase 1 family.</text>
</comment>
<organism>
    <name type="scientific">Aspergillus fumigatus (strain ATCC MYA-4609 / CBS 101355 / FGSC A1100 / Af293)</name>
    <name type="common">Neosartorya fumigata</name>
    <dbReference type="NCBI Taxonomy" id="330879"/>
    <lineage>
        <taxon>Eukaryota</taxon>
        <taxon>Fungi</taxon>
        <taxon>Dikarya</taxon>
        <taxon>Ascomycota</taxon>
        <taxon>Pezizomycotina</taxon>
        <taxon>Eurotiomycetes</taxon>
        <taxon>Eurotiomycetidae</taxon>
        <taxon>Eurotiales</taxon>
        <taxon>Aspergillaceae</taxon>
        <taxon>Aspergillus</taxon>
        <taxon>Aspergillus subgen. Fumigati</taxon>
    </lineage>
</organism>
<gene>
    <name type="primary">pelB</name>
    <name type="ORF">AFUA_2G00800</name>
</gene>
<name>PELB_ASPFU</name>
<feature type="signal peptide" evidence="2">
    <location>
        <begin position="1"/>
        <end position="18"/>
    </location>
</feature>
<feature type="chain" id="PRO_0000394346" description="Probable pectin lyase B">
    <location>
        <begin position="19"/>
        <end position="378"/>
    </location>
</feature>
<feature type="active site" evidence="2">
    <location>
        <position position="254"/>
    </location>
</feature>
<feature type="glycosylation site" description="N-linked (GlcNAc...) asparagine" evidence="2">
    <location>
        <position position="127"/>
    </location>
</feature>
<feature type="disulfide bond" evidence="1">
    <location>
        <begin position="81"/>
        <end position="100"/>
    </location>
</feature>
<feature type="disulfide bond" evidence="1">
    <location>
        <begin position="90"/>
        <end position="224"/>
    </location>
</feature>
<feature type="disulfide bond" evidence="1">
    <location>
        <begin position="321"/>
        <end position="329"/>
    </location>
</feature>
<dbReference type="EC" id="4.2.2.10"/>
<dbReference type="EMBL" id="AAHF01000008">
    <property type="protein sequence ID" value="EAL87179.1"/>
    <property type="molecule type" value="Genomic_DNA"/>
</dbReference>
<dbReference type="RefSeq" id="XP_749217.1">
    <property type="nucleotide sequence ID" value="XM_744124.1"/>
</dbReference>
<dbReference type="SMR" id="Q4WIS6"/>
<dbReference type="STRING" id="330879.Q4WIS6"/>
<dbReference type="GlyCosmos" id="Q4WIS6">
    <property type="glycosylation" value="1 site, No reported glycans"/>
</dbReference>
<dbReference type="EnsemblFungi" id="EAL87179">
    <property type="protein sequence ID" value="EAL87179"/>
    <property type="gene ID" value="AFUA_2G00800"/>
</dbReference>
<dbReference type="GeneID" id="3507253"/>
<dbReference type="KEGG" id="afm:AFUA_2G00800"/>
<dbReference type="VEuPathDB" id="FungiDB:Afu2g00800"/>
<dbReference type="eggNOG" id="ENOG502QXM6">
    <property type="taxonomic scope" value="Eukaryota"/>
</dbReference>
<dbReference type="HOGENOM" id="CLU_021980_0_1_1"/>
<dbReference type="InParanoid" id="Q4WIS6"/>
<dbReference type="OMA" id="YLGHVCQ"/>
<dbReference type="OrthoDB" id="1637350at2759"/>
<dbReference type="Proteomes" id="UP000002530">
    <property type="component" value="Chromosome 2"/>
</dbReference>
<dbReference type="GO" id="GO:0005576">
    <property type="term" value="C:extracellular region"/>
    <property type="evidence" value="ECO:0007669"/>
    <property type="project" value="UniProtKB-SubCell"/>
</dbReference>
<dbReference type="GO" id="GO:0030570">
    <property type="term" value="F:pectate lyase activity"/>
    <property type="evidence" value="ECO:0007669"/>
    <property type="project" value="InterPro"/>
</dbReference>
<dbReference type="GO" id="GO:0047490">
    <property type="term" value="F:pectin lyase activity"/>
    <property type="evidence" value="ECO:0000250"/>
    <property type="project" value="UniProtKB"/>
</dbReference>
<dbReference type="GO" id="GO:0071555">
    <property type="term" value="P:cell wall organization"/>
    <property type="evidence" value="ECO:0007669"/>
    <property type="project" value="UniProtKB-KW"/>
</dbReference>
<dbReference type="GO" id="GO:0045490">
    <property type="term" value="P:pectin catabolic process"/>
    <property type="evidence" value="ECO:0000250"/>
    <property type="project" value="UniProtKB"/>
</dbReference>
<dbReference type="FunFam" id="2.160.20.10:FF:000003">
    <property type="entry name" value="Pectin lyase F"/>
    <property type="match status" value="1"/>
</dbReference>
<dbReference type="Gene3D" id="2.160.20.10">
    <property type="entry name" value="Single-stranded right-handed beta-helix, Pectin lyase-like"/>
    <property type="match status" value="1"/>
</dbReference>
<dbReference type="InterPro" id="IPR002022">
    <property type="entry name" value="Pec_lyase"/>
</dbReference>
<dbReference type="InterPro" id="IPR012334">
    <property type="entry name" value="Pectin_lyas_fold"/>
</dbReference>
<dbReference type="InterPro" id="IPR011050">
    <property type="entry name" value="Pectin_lyase_fold/virulence"/>
</dbReference>
<dbReference type="InterPro" id="IPR045032">
    <property type="entry name" value="PEL"/>
</dbReference>
<dbReference type="PANTHER" id="PTHR31683">
    <property type="entry name" value="PECTATE LYASE 18-RELATED"/>
    <property type="match status" value="1"/>
</dbReference>
<dbReference type="PANTHER" id="PTHR31683:SF16">
    <property type="entry name" value="PECTIN LYASE A-RELATED"/>
    <property type="match status" value="1"/>
</dbReference>
<dbReference type="Pfam" id="PF00544">
    <property type="entry name" value="Pectate_lyase_4"/>
    <property type="match status" value="1"/>
</dbReference>
<dbReference type="SMART" id="SM00656">
    <property type="entry name" value="Amb_all"/>
    <property type="match status" value="1"/>
</dbReference>
<dbReference type="SUPFAM" id="SSF51126">
    <property type="entry name" value="Pectin lyase-like"/>
    <property type="match status" value="1"/>
</dbReference>
<reference key="1">
    <citation type="journal article" date="2005" name="Nature">
        <title>Genomic sequence of the pathogenic and allergenic filamentous fungus Aspergillus fumigatus.</title>
        <authorList>
            <person name="Nierman W.C."/>
            <person name="Pain A."/>
            <person name="Anderson M.J."/>
            <person name="Wortman J.R."/>
            <person name="Kim H.S."/>
            <person name="Arroyo J."/>
            <person name="Berriman M."/>
            <person name="Abe K."/>
            <person name="Archer D.B."/>
            <person name="Bermejo C."/>
            <person name="Bennett J.W."/>
            <person name="Bowyer P."/>
            <person name="Chen D."/>
            <person name="Collins M."/>
            <person name="Coulsen R."/>
            <person name="Davies R."/>
            <person name="Dyer P.S."/>
            <person name="Farman M.L."/>
            <person name="Fedorova N."/>
            <person name="Fedorova N.D."/>
            <person name="Feldblyum T.V."/>
            <person name="Fischer R."/>
            <person name="Fosker N."/>
            <person name="Fraser A."/>
            <person name="Garcia J.L."/>
            <person name="Garcia M.J."/>
            <person name="Goble A."/>
            <person name="Goldman G.H."/>
            <person name="Gomi K."/>
            <person name="Griffith-Jones S."/>
            <person name="Gwilliam R."/>
            <person name="Haas B.J."/>
            <person name="Haas H."/>
            <person name="Harris D.E."/>
            <person name="Horiuchi H."/>
            <person name="Huang J."/>
            <person name="Humphray S."/>
            <person name="Jimenez J."/>
            <person name="Keller N."/>
            <person name="Khouri H."/>
            <person name="Kitamoto K."/>
            <person name="Kobayashi T."/>
            <person name="Konzack S."/>
            <person name="Kulkarni R."/>
            <person name="Kumagai T."/>
            <person name="Lafton A."/>
            <person name="Latge J.-P."/>
            <person name="Li W."/>
            <person name="Lord A."/>
            <person name="Lu C."/>
            <person name="Majoros W.H."/>
            <person name="May G.S."/>
            <person name="Miller B.L."/>
            <person name="Mohamoud Y."/>
            <person name="Molina M."/>
            <person name="Monod M."/>
            <person name="Mouyna I."/>
            <person name="Mulligan S."/>
            <person name="Murphy L.D."/>
            <person name="O'Neil S."/>
            <person name="Paulsen I."/>
            <person name="Penalva M.A."/>
            <person name="Pertea M."/>
            <person name="Price C."/>
            <person name="Pritchard B.L."/>
            <person name="Quail M.A."/>
            <person name="Rabbinowitsch E."/>
            <person name="Rawlins N."/>
            <person name="Rajandream M.A."/>
            <person name="Reichard U."/>
            <person name="Renauld H."/>
            <person name="Robson G.D."/>
            <person name="Rodriguez de Cordoba S."/>
            <person name="Rodriguez-Pena J.M."/>
            <person name="Ronning C.M."/>
            <person name="Rutter S."/>
            <person name="Salzberg S.L."/>
            <person name="Sanchez M."/>
            <person name="Sanchez-Ferrero J.C."/>
            <person name="Saunders D."/>
            <person name="Seeger K."/>
            <person name="Squares R."/>
            <person name="Squares S."/>
            <person name="Takeuchi M."/>
            <person name="Tekaia F."/>
            <person name="Turner G."/>
            <person name="Vazquez de Aldana C.R."/>
            <person name="Weidman J."/>
            <person name="White O."/>
            <person name="Woodward J.R."/>
            <person name="Yu J.-H."/>
            <person name="Fraser C.M."/>
            <person name="Galagan J.E."/>
            <person name="Asai K."/>
            <person name="Machida M."/>
            <person name="Hall N."/>
            <person name="Barrell B.G."/>
            <person name="Denning D.W."/>
        </authorList>
    </citation>
    <scope>NUCLEOTIDE SEQUENCE [LARGE SCALE GENOMIC DNA]</scope>
    <source>
        <strain>ATCC MYA-4609 / CBS 101355 / FGSC A1100 / Af293</strain>
    </source>
</reference>
<sequence>MKYQDLLAIAGCIANAGAVSVSGAAEGFAKGVTGGGSATAVYPSTTAELVSYLGDSEARVIVLTKTFDFTGTEGTTTATGCAPWGTASACQLAINQNNWCTNYEPNAPSVSVTYDNAGILGITVKSNKSLIGSGSSGVIKGKGLRIVSGASNIIIQNIAITDINPKYVWGGDAITIDNADMVWIDHVTTARIGRQHLVLGTSASNRVTISNNYFNGVSSYSATCDGYHYWGIYLDGSNDLVTMKGNYIYHFSGRSPKVQGNTLLHAVNNYWYDSSGHAFEIGSGGYVLAEGNVFQNIDTIVQSPVDGQLFTSPDSNTNKVCSTYLGHVCQVNGFGSSGTFSQADTGFLSNFAGKNIASASAYTAVQSTVPSSAGQGKI</sequence>
<accession>Q4WIS6</accession>
<protein>
    <recommendedName>
        <fullName>Probable pectin lyase B</fullName>
        <shortName>PLB</shortName>
        <ecNumber>4.2.2.10</ecNumber>
    </recommendedName>
</protein>
<keyword id="KW-0119">Carbohydrate metabolism</keyword>
<keyword id="KW-0961">Cell wall biogenesis/degradation</keyword>
<keyword id="KW-1015">Disulfide bond</keyword>
<keyword id="KW-0325">Glycoprotein</keyword>
<keyword id="KW-0456">Lyase</keyword>
<keyword id="KW-0624">Polysaccharide degradation</keyword>
<keyword id="KW-1185">Reference proteome</keyword>
<keyword id="KW-0964">Secreted</keyword>
<keyword id="KW-0732">Signal</keyword>